<name>VG07_GAHVM</name>
<keyword id="KW-1185">Reference proteome</keyword>
<proteinExistence type="predicted"/>
<organismHost>
    <name type="scientific">Gallus gallus</name>
    <name type="common">Chicken</name>
    <dbReference type="NCBI Taxonomy" id="9031"/>
</organismHost>
<sequence length="115" mass="12308">MCMQMSSANASAFALRTNNILYYIILLDSGANAEVSQSDMAICYHVTCTAPNSHLSVGGTCGGGSALVYKRAAVARFLLSSRCSLRMARPIPDIFPVRNATLGDERAEFLPSSNK</sequence>
<accession>Q77MQ9</accession>
<gene>
    <name type="primary">MDV007</name>
    <name type="synonym">MDV074</name>
</gene>
<organism>
    <name type="scientific">Gallid herpesvirus 2 (strain Chicken/Md5/ATCC VR-987)</name>
    <name type="common">GaHV-2</name>
    <name type="synonym">Marek's disease herpesvirus type 1</name>
    <dbReference type="NCBI Taxonomy" id="10389"/>
    <lineage>
        <taxon>Viruses</taxon>
        <taxon>Duplodnaviria</taxon>
        <taxon>Heunggongvirae</taxon>
        <taxon>Peploviricota</taxon>
        <taxon>Herviviricetes</taxon>
        <taxon>Herpesvirales</taxon>
        <taxon>Orthoherpesviridae</taxon>
        <taxon>Alphaherpesvirinae</taxon>
        <taxon>Mardivirus</taxon>
        <taxon>Mardivirus gallidalpha2</taxon>
        <taxon>Gallid alphaherpesvirus 2</taxon>
    </lineage>
</organism>
<protein>
    <recommendedName>
        <fullName>Uncharacterized gene 7 protein</fullName>
    </recommendedName>
</protein>
<feature type="chain" id="PRO_0000406554" description="Uncharacterized gene 7 protein">
    <location>
        <begin position="1"/>
        <end position="115"/>
    </location>
</feature>
<reference key="1">
    <citation type="journal article" date="2000" name="J. Virol.">
        <title>The genome of a very virulent Marek's disease virus.</title>
        <authorList>
            <person name="Tulman E.R."/>
            <person name="Afonso C.L."/>
            <person name="Lu Z."/>
            <person name="Zsak L."/>
            <person name="Rock D.L."/>
            <person name="Kutish G.F."/>
        </authorList>
    </citation>
    <scope>NUCLEOTIDE SEQUENCE [LARGE SCALE GENOMIC DNA]</scope>
</reference>
<dbReference type="EMBL" id="AF243438">
    <property type="protein sequence ID" value="AAG14254.1"/>
    <property type="molecule type" value="Genomic_DNA"/>
</dbReference>
<dbReference type="EMBL" id="AF243438">
    <property type="protein sequence ID" value="AAG14277.1"/>
    <property type="molecule type" value="Genomic_DNA"/>
</dbReference>
<dbReference type="Proteomes" id="UP000008072">
    <property type="component" value="Segment"/>
</dbReference>